<protein>
    <recommendedName>
        <fullName>Protein SLX4IP</fullName>
    </recommendedName>
    <alternativeName>
        <fullName>SLX4-interacting protein</fullName>
    </alternativeName>
</protein>
<organism>
    <name type="scientific">Mus musculus</name>
    <name type="common">Mouse</name>
    <dbReference type="NCBI Taxonomy" id="10090"/>
    <lineage>
        <taxon>Eukaryota</taxon>
        <taxon>Metazoa</taxon>
        <taxon>Chordata</taxon>
        <taxon>Craniata</taxon>
        <taxon>Vertebrata</taxon>
        <taxon>Euteleostomi</taxon>
        <taxon>Mammalia</taxon>
        <taxon>Eutheria</taxon>
        <taxon>Euarchontoglires</taxon>
        <taxon>Glires</taxon>
        <taxon>Rodentia</taxon>
        <taxon>Myomorpha</taxon>
        <taxon>Muroidea</taxon>
        <taxon>Muridae</taxon>
        <taxon>Murinae</taxon>
        <taxon>Mus</taxon>
        <taxon>Mus</taxon>
    </lineage>
</organism>
<name>SLX4I_MOUSE</name>
<keyword id="KW-0025">Alternative splicing</keyword>
<keyword id="KW-1017">Isopeptide bond</keyword>
<keyword id="KW-0597">Phosphoprotein</keyword>
<keyword id="KW-1185">Reference proteome</keyword>
<keyword id="KW-0832">Ubl conjugation</keyword>
<evidence type="ECO:0000250" key="1"/>
<evidence type="ECO:0000250" key="2">
    <source>
        <dbReference type="UniProtKB" id="Q5VYV7"/>
    </source>
</evidence>
<evidence type="ECO:0000256" key="3">
    <source>
        <dbReference type="SAM" id="MobiDB-lite"/>
    </source>
</evidence>
<evidence type="ECO:0000303" key="4">
    <source>
    </source>
</evidence>
<evidence type="ECO:0000303" key="5">
    <source>
    </source>
</evidence>
<evidence type="ECO:0000305" key="6"/>
<gene>
    <name type="primary">Slx4ip</name>
</gene>
<feature type="chain" id="PRO_0000306120" description="Protein SLX4IP">
    <location>
        <begin position="1"/>
        <end position="413"/>
    </location>
</feature>
<feature type="region of interest" description="Disordered" evidence="3">
    <location>
        <begin position="172"/>
        <end position="193"/>
    </location>
</feature>
<feature type="region of interest" description="Disordered" evidence="3">
    <location>
        <begin position="228"/>
        <end position="300"/>
    </location>
</feature>
<feature type="region of interest" description="Disordered" evidence="3">
    <location>
        <begin position="363"/>
        <end position="413"/>
    </location>
</feature>
<feature type="compositionally biased region" description="Polar residues" evidence="3">
    <location>
        <begin position="238"/>
        <end position="254"/>
    </location>
</feature>
<feature type="compositionally biased region" description="Polar residues" evidence="3">
    <location>
        <begin position="364"/>
        <end position="389"/>
    </location>
</feature>
<feature type="modified residue" description="Phosphothreonine" evidence="2">
    <location>
        <position position="389"/>
    </location>
</feature>
<feature type="cross-link" description="Glycyl lysine isopeptide (Lys-Gly) (interchain with G-Cter in SUMO2)" evidence="2">
    <location>
        <position position="61"/>
    </location>
</feature>
<feature type="cross-link" description="Glycyl lysine isopeptide (Lys-Gly) (interchain with G-Cter in SUMO2)" evidence="2">
    <location>
        <position position="79"/>
    </location>
</feature>
<feature type="cross-link" description="Glycyl lysine isopeptide (Lys-Gly) (interchain with G-Cter in SUMO2)" evidence="2">
    <location>
        <position position="167"/>
    </location>
</feature>
<feature type="cross-link" description="Glycyl lysine isopeptide (Lys-Gly) (interchain with G-Cter in SUMO2)" evidence="2">
    <location>
        <position position="176"/>
    </location>
</feature>
<feature type="cross-link" description="Glycyl lysine isopeptide (Lys-Gly) (interchain with G-Cter in SUMO2)" evidence="2">
    <location>
        <position position="236"/>
    </location>
</feature>
<feature type="cross-link" description="Glycyl lysine isopeptide (Lys-Gly) (interchain with G-Cter in SUMO2)" evidence="2">
    <location>
        <position position="288"/>
    </location>
</feature>
<feature type="cross-link" description="Glycyl lysine isopeptide (Lys-Gly) (interchain with G-Cter in SUMO2)" evidence="2">
    <location>
        <position position="344"/>
    </location>
</feature>
<feature type="cross-link" description="Glycyl lysine isopeptide (Lys-Gly) (interchain with G-Cter in SUMO2)" evidence="2">
    <location>
        <position position="353"/>
    </location>
</feature>
<feature type="cross-link" description="Glycyl lysine isopeptide (Lys-Gly) (interchain with G-Cter in SUMO2)" evidence="2">
    <location>
        <position position="396"/>
    </location>
</feature>
<feature type="splice variant" id="VSP_028421" description="In isoform 2." evidence="5">
    <original>EVCLLLKETIDSRVKEYVGIYKQRKPSSAEFTRSSPLSLKGYGFQITAYFLKRGIHLHCIQNSQNTELRVFPERFVVCVSQLAFGHDIWANQNEKS</original>
    <variation>VMAFRSQLISSREGYTFTVSRTPRIL</variation>
    <location>
        <begin position="40"/>
        <end position="135"/>
    </location>
</feature>
<feature type="splice variant" id="VSP_028422" description="In isoform 3." evidence="4">
    <original>EVCLLLKETIDSRVKEYVGIYKQRKPSSAEFTRSSPLSLKGYGFQITAYFLKRGIHLHCIQNSQNTELRVFPERFVVCVSQLAFGH</original>
    <variation>VMAFRSQLISSREGYTFTVSRTPRILNFVYFLKDLWCVLVSLHLVMIFGQTRMKNRQKKPSMECLIIFLSVQRVHRLLVQSSRGTL</variation>
    <location>
        <begin position="40"/>
        <end position="125"/>
    </location>
</feature>
<feature type="splice variant" id="VSP_028423" description="In isoform 3." evidence="4">
    <location>
        <begin position="126"/>
        <end position="413"/>
    </location>
</feature>
<comment type="subunit">
    <text evidence="1">Interacts with SLX4/BTBD12; subunit of different structure-specific endonucleases.</text>
</comment>
<comment type="alternative products">
    <event type="alternative splicing"/>
    <isoform>
        <id>Q9D7Y9-1</id>
        <name>1</name>
        <sequence type="displayed"/>
    </isoform>
    <isoform>
        <id>Q9D7Y9-2</id>
        <name>2</name>
        <sequence type="described" ref="VSP_028421"/>
    </isoform>
    <isoform>
        <id>Q9D7Y9-3</id>
        <name>3</name>
        <sequence type="described" ref="VSP_028422 VSP_028423"/>
    </isoform>
</comment>
<comment type="similarity">
    <text evidence="6">Belongs to the SLX4IP family.</text>
</comment>
<reference key="1">
    <citation type="journal article" date="2005" name="Science">
        <title>The transcriptional landscape of the mammalian genome.</title>
        <authorList>
            <person name="Carninci P."/>
            <person name="Kasukawa T."/>
            <person name="Katayama S."/>
            <person name="Gough J."/>
            <person name="Frith M.C."/>
            <person name="Maeda N."/>
            <person name="Oyama R."/>
            <person name="Ravasi T."/>
            <person name="Lenhard B."/>
            <person name="Wells C."/>
            <person name="Kodzius R."/>
            <person name="Shimokawa K."/>
            <person name="Bajic V.B."/>
            <person name="Brenner S.E."/>
            <person name="Batalov S."/>
            <person name="Forrest A.R."/>
            <person name="Zavolan M."/>
            <person name="Davis M.J."/>
            <person name="Wilming L.G."/>
            <person name="Aidinis V."/>
            <person name="Allen J.E."/>
            <person name="Ambesi-Impiombato A."/>
            <person name="Apweiler R."/>
            <person name="Aturaliya R.N."/>
            <person name="Bailey T.L."/>
            <person name="Bansal M."/>
            <person name="Baxter L."/>
            <person name="Beisel K.W."/>
            <person name="Bersano T."/>
            <person name="Bono H."/>
            <person name="Chalk A.M."/>
            <person name="Chiu K.P."/>
            <person name="Choudhary V."/>
            <person name="Christoffels A."/>
            <person name="Clutterbuck D.R."/>
            <person name="Crowe M.L."/>
            <person name="Dalla E."/>
            <person name="Dalrymple B.P."/>
            <person name="de Bono B."/>
            <person name="Della Gatta G."/>
            <person name="di Bernardo D."/>
            <person name="Down T."/>
            <person name="Engstrom P."/>
            <person name="Fagiolini M."/>
            <person name="Faulkner G."/>
            <person name="Fletcher C.F."/>
            <person name="Fukushima T."/>
            <person name="Furuno M."/>
            <person name="Futaki S."/>
            <person name="Gariboldi M."/>
            <person name="Georgii-Hemming P."/>
            <person name="Gingeras T.R."/>
            <person name="Gojobori T."/>
            <person name="Green R.E."/>
            <person name="Gustincich S."/>
            <person name="Harbers M."/>
            <person name="Hayashi Y."/>
            <person name="Hensch T.K."/>
            <person name="Hirokawa N."/>
            <person name="Hill D."/>
            <person name="Huminiecki L."/>
            <person name="Iacono M."/>
            <person name="Ikeo K."/>
            <person name="Iwama A."/>
            <person name="Ishikawa T."/>
            <person name="Jakt M."/>
            <person name="Kanapin A."/>
            <person name="Katoh M."/>
            <person name="Kawasawa Y."/>
            <person name="Kelso J."/>
            <person name="Kitamura H."/>
            <person name="Kitano H."/>
            <person name="Kollias G."/>
            <person name="Krishnan S.P."/>
            <person name="Kruger A."/>
            <person name="Kummerfeld S.K."/>
            <person name="Kurochkin I.V."/>
            <person name="Lareau L.F."/>
            <person name="Lazarevic D."/>
            <person name="Lipovich L."/>
            <person name="Liu J."/>
            <person name="Liuni S."/>
            <person name="McWilliam S."/>
            <person name="Madan Babu M."/>
            <person name="Madera M."/>
            <person name="Marchionni L."/>
            <person name="Matsuda H."/>
            <person name="Matsuzawa S."/>
            <person name="Miki H."/>
            <person name="Mignone F."/>
            <person name="Miyake S."/>
            <person name="Morris K."/>
            <person name="Mottagui-Tabar S."/>
            <person name="Mulder N."/>
            <person name="Nakano N."/>
            <person name="Nakauchi H."/>
            <person name="Ng P."/>
            <person name="Nilsson R."/>
            <person name="Nishiguchi S."/>
            <person name="Nishikawa S."/>
            <person name="Nori F."/>
            <person name="Ohara O."/>
            <person name="Okazaki Y."/>
            <person name="Orlando V."/>
            <person name="Pang K.C."/>
            <person name="Pavan W.J."/>
            <person name="Pavesi G."/>
            <person name="Pesole G."/>
            <person name="Petrovsky N."/>
            <person name="Piazza S."/>
            <person name="Reed J."/>
            <person name="Reid J.F."/>
            <person name="Ring B.Z."/>
            <person name="Ringwald M."/>
            <person name="Rost B."/>
            <person name="Ruan Y."/>
            <person name="Salzberg S.L."/>
            <person name="Sandelin A."/>
            <person name="Schneider C."/>
            <person name="Schoenbach C."/>
            <person name="Sekiguchi K."/>
            <person name="Semple C.A."/>
            <person name="Seno S."/>
            <person name="Sessa L."/>
            <person name="Sheng Y."/>
            <person name="Shibata Y."/>
            <person name="Shimada H."/>
            <person name="Shimada K."/>
            <person name="Silva D."/>
            <person name="Sinclair B."/>
            <person name="Sperling S."/>
            <person name="Stupka E."/>
            <person name="Sugiura K."/>
            <person name="Sultana R."/>
            <person name="Takenaka Y."/>
            <person name="Taki K."/>
            <person name="Tammoja K."/>
            <person name="Tan S.L."/>
            <person name="Tang S."/>
            <person name="Taylor M.S."/>
            <person name="Tegner J."/>
            <person name="Teichmann S.A."/>
            <person name="Ueda H.R."/>
            <person name="van Nimwegen E."/>
            <person name="Verardo R."/>
            <person name="Wei C.L."/>
            <person name="Yagi K."/>
            <person name="Yamanishi H."/>
            <person name="Zabarovsky E."/>
            <person name="Zhu S."/>
            <person name="Zimmer A."/>
            <person name="Hide W."/>
            <person name="Bult C."/>
            <person name="Grimmond S.M."/>
            <person name="Teasdale R.D."/>
            <person name="Liu E.T."/>
            <person name="Brusic V."/>
            <person name="Quackenbush J."/>
            <person name="Wahlestedt C."/>
            <person name="Mattick J.S."/>
            <person name="Hume D.A."/>
            <person name="Kai C."/>
            <person name="Sasaki D."/>
            <person name="Tomaru Y."/>
            <person name="Fukuda S."/>
            <person name="Kanamori-Katayama M."/>
            <person name="Suzuki M."/>
            <person name="Aoki J."/>
            <person name="Arakawa T."/>
            <person name="Iida J."/>
            <person name="Imamura K."/>
            <person name="Itoh M."/>
            <person name="Kato T."/>
            <person name="Kawaji H."/>
            <person name="Kawagashira N."/>
            <person name="Kawashima T."/>
            <person name="Kojima M."/>
            <person name="Kondo S."/>
            <person name="Konno H."/>
            <person name="Nakano K."/>
            <person name="Ninomiya N."/>
            <person name="Nishio T."/>
            <person name="Okada M."/>
            <person name="Plessy C."/>
            <person name="Shibata K."/>
            <person name="Shiraki T."/>
            <person name="Suzuki S."/>
            <person name="Tagami M."/>
            <person name="Waki K."/>
            <person name="Watahiki A."/>
            <person name="Okamura-Oho Y."/>
            <person name="Suzuki H."/>
            <person name="Kawai J."/>
            <person name="Hayashizaki Y."/>
        </authorList>
    </citation>
    <scope>NUCLEOTIDE SEQUENCE [LARGE SCALE MRNA] (ISOFORMS 1 AND 2)</scope>
    <source>
        <strain>C57BL/6J</strain>
        <tissue>Egg</tissue>
        <tissue>Embryonic stem cell</tissue>
        <tissue>Stomach</tissue>
    </source>
</reference>
<reference key="2">
    <citation type="journal article" date="2009" name="PLoS Biol.">
        <title>Lineage-specific biology revealed by a finished genome assembly of the mouse.</title>
        <authorList>
            <person name="Church D.M."/>
            <person name="Goodstadt L."/>
            <person name="Hillier L.W."/>
            <person name="Zody M.C."/>
            <person name="Goldstein S."/>
            <person name="She X."/>
            <person name="Bult C.J."/>
            <person name="Agarwala R."/>
            <person name="Cherry J.L."/>
            <person name="DiCuccio M."/>
            <person name="Hlavina W."/>
            <person name="Kapustin Y."/>
            <person name="Meric P."/>
            <person name="Maglott D."/>
            <person name="Birtle Z."/>
            <person name="Marques A.C."/>
            <person name="Graves T."/>
            <person name="Zhou S."/>
            <person name="Teague B."/>
            <person name="Potamousis K."/>
            <person name="Churas C."/>
            <person name="Place M."/>
            <person name="Herschleb J."/>
            <person name="Runnheim R."/>
            <person name="Forrest D."/>
            <person name="Amos-Landgraf J."/>
            <person name="Schwartz D.C."/>
            <person name="Cheng Z."/>
            <person name="Lindblad-Toh K."/>
            <person name="Eichler E.E."/>
            <person name="Ponting C.P."/>
        </authorList>
    </citation>
    <scope>NUCLEOTIDE SEQUENCE [LARGE SCALE GENOMIC DNA]</scope>
    <source>
        <strain>C57BL/6J</strain>
    </source>
</reference>
<reference key="3">
    <citation type="journal article" date="2004" name="Genome Res.">
        <title>The status, quality, and expansion of the NIH full-length cDNA project: the Mammalian Gene Collection (MGC).</title>
        <authorList>
            <consortium name="The MGC Project Team"/>
        </authorList>
    </citation>
    <scope>NUCLEOTIDE SEQUENCE [LARGE SCALE MRNA] (ISOFORMS 1 AND 3)</scope>
    <source>
        <strain>C57BL/6J</strain>
        <tissue>Brain</tissue>
        <tissue>Embryo</tissue>
    </source>
</reference>
<sequence length="413" mass="45736">MASKKFAVKCGNFAVLVDLHVLPQGSNRDSSWFSEQKKEEVCLLLKETIDSRVKEYVGIYKQRKPSSAEFTRSSPLSLKGYGFQITAYFLKRGIHLHCIQNSQNTELRVFPERFVVCVSQLAFGHDIWANQNEKSTKKALHGVSDYFPECAESSPSPGTKLKRNALKEIVRRTKSKGTDVSKPQPSGDLVGRSSDSVITVVPWRRDASAILLSESVGQAQDDIRAAKSHQELPVQKLENVSQTQPGDTRSQQQLHPGEWLKTGLLSRSPAYNYESASPGPKQSLRAAKTQQKHRNCGSVEDCDHRRRVSLGNEGLVPEDADRERSTAVRVLPALELSDPGLLLKQDLAKAKAKEELHALENLSSRHLVTNNPGQAQQSDSAAITEQLATDQGGPSKKRKKLQSYNRGCSGKKN</sequence>
<proteinExistence type="evidence at transcript level"/>
<dbReference type="EMBL" id="AK008687">
    <property type="protein sequence ID" value="BAB25833.1"/>
    <property type="molecule type" value="mRNA"/>
</dbReference>
<dbReference type="EMBL" id="AK010392">
    <property type="protein sequence ID" value="BAB26906.1"/>
    <property type="molecule type" value="mRNA"/>
</dbReference>
<dbReference type="EMBL" id="AK136226">
    <property type="protein sequence ID" value="BAE22883.1"/>
    <property type="molecule type" value="mRNA"/>
</dbReference>
<dbReference type="EMBL" id="AL713981">
    <property type="status" value="NOT_ANNOTATED_CDS"/>
    <property type="molecule type" value="Genomic_DNA"/>
</dbReference>
<dbReference type="EMBL" id="AL731706">
    <property type="status" value="NOT_ANNOTATED_CDS"/>
    <property type="molecule type" value="Genomic_DNA"/>
</dbReference>
<dbReference type="EMBL" id="BC067037">
    <property type="protein sequence ID" value="AAH67037.1"/>
    <property type="molecule type" value="mRNA"/>
</dbReference>
<dbReference type="EMBL" id="BC071202">
    <property type="protein sequence ID" value="AAH71202.1"/>
    <property type="molecule type" value="mRNA"/>
</dbReference>
<dbReference type="CCDS" id="CCDS16795.1">
    <molecule id="Q9D7Y9-1"/>
</dbReference>
<dbReference type="CCDS" id="CCDS16796.1">
    <molecule id="Q9D7Y9-2"/>
</dbReference>
<dbReference type="RefSeq" id="NP_001033730.1">
    <molecule id="Q9D7Y9-1"/>
    <property type="nucleotide sequence ID" value="NM_001038641.2"/>
</dbReference>
<dbReference type="RefSeq" id="NP_001342598.1">
    <molecule id="Q9D7Y9-3"/>
    <property type="nucleotide sequence ID" value="NM_001355669.1"/>
</dbReference>
<dbReference type="RefSeq" id="NP_001342599.1">
    <molecule id="Q9D7Y9-3"/>
    <property type="nucleotide sequence ID" value="NM_001355670.1"/>
</dbReference>
<dbReference type="RefSeq" id="NP_001342600.1">
    <molecule id="Q9D7Y9-3"/>
    <property type="nucleotide sequence ID" value="NM_001355671.1"/>
</dbReference>
<dbReference type="RefSeq" id="NP_082477.1">
    <molecule id="Q9D7Y9-2"/>
    <property type="nucleotide sequence ID" value="NM_028201.3"/>
</dbReference>
<dbReference type="RefSeq" id="NP_083110.1">
    <molecule id="Q9D7Y9-1"/>
    <property type="nucleotide sequence ID" value="NM_028834.3"/>
</dbReference>
<dbReference type="RefSeq" id="XP_006500353.1">
    <property type="nucleotide sequence ID" value="XM_006500290.3"/>
</dbReference>
<dbReference type="RefSeq" id="XP_006500356.1">
    <property type="nucleotide sequence ID" value="XM_006500293.3"/>
</dbReference>
<dbReference type="RefSeq" id="XP_011238113.1">
    <molecule id="Q9D7Y9-1"/>
    <property type="nucleotide sequence ID" value="XM_011239811.3"/>
</dbReference>
<dbReference type="RefSeq" id="XP_036018529.1">
    <molecule id="Q9D7Y9-1"/>
    <property type="nucleotide sequence ID" value="XM_036162636.1"/>
</dbReference>
<dbReference type="RefSeq" id="XP_036018530.1">
    <molecule id="Q9D7Y9-1"/>
    <property type="nucleotide sequence ID" value="XM_036162637.1"/>
</dbReference>
<dbReference type="RefSeq" id="XP_036018531.1">
    <molecule id="Q9D7Y9-2"/>
    <property type="nucleotide sequence ID" value="XM_036162638.1"/>
</dbReference>
<dbReference type="RefSeq" id="XP_036018532.1">
    <molecule id="Q9D7Y9-3"/>
    <property type="nucleotide sequence ID" value="XM_036162639.1"/>
</dbReference>
<dbReference type="RefSeq" id="XP_036018533.1">
    <molecule id="Q9D7Y9-3"/>
    <property type="nucleotide sequence ID" value="XM_036162640.1"/>
</dbReference>
<dbReference type="FunCoup" id="Q9D7Y9">
    <property type="interactions" value="126"/>
</dbReference>
<dbReference type="STRING" id="10090.ENSMUSP00000096914"/>
<dbReference type="iPTMnet" id="Q9D7Y9"/>
<dbReference type="PhosphoSitePlus" id="Q9D7Y9"/>
<dbReference type="jPOST" id="Q9D7Y9"/>
<dbReference type="PaxDb" id="10090-ENSMUSP00000096914"/>
<dbReference type="PeptideAtlas" id="Q9D7Y9"/>
<dbReference type="ProteomicsDB" id="261427">
    <molecule id="Q9D7Y9-1"/>
</dbReference>
<dbReference type="ProteomicsDB" id="261428">
    <molecule id="Q9D7Y9-2"/>
</dbReference>
<dbReference type="Pumba" id="Q9D7Y9"/>
<dbReference type="Antibodypedia" id="62780">
    <property type="antibodies" value="26 antibodies from 6 providers"/>
</dbReference>
<dbReference type="Ensembl" id="ENSMUST00000028737.13">
    <molecule id="Q9D7Y9-2"/>
    <property type="protein sequence ID" value="ENSMUSP00000028737.7"/>
    <property type="gene ID" value="ENSMUSG00000027281.17"/>
</dbReference>
<dbReference type="Ensembl" id="ENSMUST00000099311.9">
    <molecule id="Q9D7Y9-1"/>
    <property type="protein sequence ID" value="ENSMUSP00000096914.3"/>
    <property type="gene ID" value="ENSMUSG00000027281.17"/>
</dbReference>
<dbReference type="Ensembl" id="ENSMUST00000180277.3">
    <molecule id="Q9D7Y9-1"/>
    <property type="protein sequence ID" value="ENSMUSP00000136131.2"/>
    <property type="gene ID" value="ENSMUSG00000027281.17"/>
</dbReference>
<dbReference type="GeneID" id="74243"/>
<dbReference type="KEGG" id="mmu:74243"/>
<dbReference type="UCSC" id="uc008mou.1">
    <molecule id="Q9D7Y9-2"/>
    <property type="organism name" value="mouse"/>
</dbReference>
<dbReference type="UCSC" id="uc008mov.1">
    <molecule id="Q9D7Y9-3"/>
    <property type="organism name" value="mouse"/>
</dbReference>
<dbReference type="UCSC" id="uc008mow.1">
    <molecule id="Q9D7Y9-1"/>
    <property type="organism name" value="mouse"/>
</dbReference>
<dbReference type="AGR" id="MGI:1921493"/>
<dbReference type="CTD" id="128710"/>
<dbReference type="MGI" id="MGI:1921493">
    <property type="gene designation" value="Slx4ip"/>
</dbReference>
<dbReference type="VEuPathDB" id="HostDB:ENSMUSG00000027281"/>
<dbReference type="eggNOG" id="ENOG502QQHZ">
    <property type="taxonomic scope" value="Eukaryota"/>
</dbReference>
<dbReference type="GeneTree" id="ENSGT00390000016400"/>
<dbReference type="HOGENOM" id="CLU_039900_0_0_1"/>
<dbReference type="InParanoid" id="Q9D7Y9"/>
<dbReference type="OMA" id="MKNKPGQ"/>
<dbReference type="OrthoDB" id="9933290at2759"/>
<dbReference type="PhylomeDB" id="Q9D7Y9"/>
<dbReference type="TreeFam" id="TF330769"/>
<dbReference type="BioGRID-ORCS" id="74243">
    <property type="hits" value="2 hits in 75 CRISPR screens"/>
</dbReference>
<dbReference type="ChiTaRS" id="Slx4ip">
    <property type="organism name" value="mouse"/>
</dbReference>
<dbReference type="PRO" id="PR:Q9D7Y9"/>
<dbReference type="Proteomes" id="UP000000589">
    <property type="component" value="Chromosome 2"/>
</dbReference>
<dbReference type="RNAct" id="Q9D7Y9">
    <property type="molecule type" value="protein"/>
</dbReference>
<dbReference type="Bgee" id="ENSMUSG00000027281">
    <property type="expression patterns" value="Expressed in animal zygote and 168 other cell types or tissues"/>
</dbReference>
<dbReference type="ExpressionAtlas" id="Q9D7Y9">
    <property type="expression patterns" value="baseline and differential"/>
</dbReference>
<dbReference type="InterPro" id="IPR031479">
    <property type="entry name" value="SLX4IP"/>
</dbReference>
<dbReference type="PANTHER" id="PTHR28557">
    <property type="entry name" value="PROTEIN SLX4IP"/>
    <property type="match status" value="1"/>
</dbReference>
<dbReference type="PANTHER" id="PTHR28557:SF1">
    <property type="entry name" value="PROTEIN SLX4IP"/>
    <property type="match status" value="1"/>
</dbReference>
<dbReference type="Pfam" id="PF15744">
    <property type="entry name" value="UPF0492"/>
    <property type="match status" value="1"/>
</dbReference>
<accession>Q9D7Y9</accession>
<accession>Q6NXK0</accession>
<accession>Q9CWT7</accession>